<name>STU1_SCHPO</name>
<protein>
    <recommendedName>
        <fullName>Protein peg1</fullName>
    </recommendedName>
</protein>
<keyword id="KW-0131">Cell cycle</keyword>
<keyword id="KW-0132">Cell division</keyword>
<keyword id="KW-0175">Coiled coil</keyword>
<keyword id="KW-0963">Cytoplasm</keyword>
<keyword id="KW-0206">Cytoskeleton</keyword>
<keyword id="KW-0493">Microtubule</keyword>
<keyword id="KW-0498">Mitosis</keyword>
<keyword id="KW-0597">Phosphoprotein</keyword>
<keyword id="KW-1185">Reference proteome</keyword>
<organism>
    <name type="scientific">Schizosaccharomyces pombe (strain 972 / ATCC 24843)</name>
    <name type="common">Fission yeast</name>
    <dbReference type="NCBI Taxonomy" id="284812"/>
    <lineage>
        <taxon>Eukaryota</taxon>
        <taxon>Fungi</taxon>
        <taxon>Dikarya</taxon>
        <taxon>Ascomycota</taxon>
        <taxon>Taphrinomycotina</taxon>
        <taxon>Schizosaccharomycetes</taxon>
        <taxon>Schizosaccharomycetales</taxon>
        <taxon>Schizosaccharomycetaceae</taxon>
        <taxon>Schizosaccharomyces</taxon>
    </lineage>
</organism>
<gene>
    <name type="primary">peg1</name>
    <name type="ORF">SPAC3G9.12</name>
</gene>
<accession>O42874</accession>
<proteinExistence type="evidence at protein level"/>
<sequence>MADKDAQDFLKFLKSNASTDEKTRCLDTLRSFFNKNNIPNADLGLFVECFRLALTTVNPLLLRSSVACFETFLRRLRAQYPTWLKFRVPMLKNLVIDHIASRDLQKRVLNILIDLWHFNPSEIEKSLIHLSTTSKSAETRIQCFKWFVLAHNAHLSFDVKSLRPALYINLENANPSVREEAKEVLLLIYKNLSTSAKMQFITDVETTSGLRREILQSLVEELSLISSSSEVIIVQNSASSFQPAPFMTAVATLYPGVELENVKPLLANFSKQLEQDSASMLPAFEGRETEQNWSVRQDSVLRLRQYLRGNACIDYLPELLSVLKTLLPGILLALLSLRTTLSSSAIQLIKEMAIILKSNIDPFLELILPNLLKVCSVTKKLASQAANVTFAAILVNCGVLSRNLSFISLAAHDTNAQLRVFSSNWIFMLISLSPELKNLASLQTNLKAFEKLICRGLADSNSQVREVYRKSFWKLSEYFPSVQEELTNTLEPSVLKQLHLANPNRQAASFNFSGPKRAPIRPLSNLRSFSKSQKEETSSNSSNSSGTRRLGLPQRATPASRERVLPYTRSQAFHSTSLPPSLPSGHSPSIAIPSKRSVSATIKDESKTFELLKNIQRKYELILSGSSVDLPSAEFLSSNLTDALYSGSSICYSLIFSHSLLDLTFQYVDIASLLSQFLLCVYDPSNVGHSFALASFPYVKSHYDAHKYFPIVFDVLMNISNMAPHVKVFPFNTNQKRLIIHGCLLWLKEISDTKLNQLENKPFFVTDKLRYYSSKILAMTAKTKLTSKNWIPLSGLLFSLRAHDTFMFDGLLDRLNEESRTKLVSSWSKQDAFDYSKSSTHQEHLSKNLPTLNTSSSSNSSQTDLLVPHGKGETKETEMQSPIESKEGLLSKDTHIESPQGTSLEKENEEEGKNPVESNCSEESLDDHNIDQTLVNKKETLAQDSESLLQKNNALNEKGFENQFGLSSSAAKVLNKDTLDHVSGPISNSVSSSFKDFTRTPFKEINGERETGFELTSYVNALSKKDDINVQKTENVDESVGLNAMFMDNVNQDSLNSVDQSSGKDKLLLTSSTPNKPTTFFMPANEEILGSPAKDYDIHDQSYSVHELHSENMRENVGQSSLIYNNRDYMNTPMNDFSLSFSEIKGGILESPVESPMTGTISPIDADESVLHDIPAYESLNKSESNKYQEQAYSTPLHHTLNVLPKNKWILSRMHKMENGSPINVDKNLDDAVAALEAAVKELNDGSVNTKTLKFCIKVCKETPSMLYHSHGLLPAILHYIESNNSAMHISDCLILLHEFLVQGYQGVDMHTYHNIICILIEKAEKCKDEPVILAGIEDNITLIAEIADLQGLYEFTQQRLQSLNTETGEKSAPLLLMLLSAILMRLKDLEFLETKDLLRHVVLKYIDHTNPEIRKATFNVCLAVNTIVNNVDETFSILGGLNEGQRLLFMHYLKMKSDEKN</sequence>
<dbReference type="EMBL" id="CU329670">
    <property type="protein sequence ID" value="CAA15921.1"/>
    <property type="molecule type" value="Genomic_DNA"/>
</dbReference>
<dbReference type="PIR" id="T11648">
    <property type="entry name" value="T11648"/>
</dbReference>
<dbReference type="RefSeq" id="NP_594084.1">
    <property type="nucleotide sequence ID" value="NM_001019501.2"/>
</dbReference>
<dbReference type="BioGRID" id="279821">
    <property type="interactions" value="22"/>
</dbReference>
<dbReference type="FunCoup" id="O42874">
    <property type="interactions" value="7"/>
</dbReference>
<dbReference type="IntAct" id="O42874">
    <property type="interactions" value="3"/>
</dbReference>
<dbReference type="STRING" id="284812.O42874"/>
<dbReference type="iPTMnet" id="O42874"/>
<dbReference type="PaxDb" id="4896-SPAC3G9.12.1"/>
<dbReference type="EnsemblFungi" id="SPAC3G9.12.1">
    <property type="protein sequence ID" value="SPAC3G9.12.1:pep"/>
    <property type="gene ID" value="SPAC3G9.12"/>
</dbReference>
<dbReference type="GeneID" id="2543399"/>
<dbReference type="KEGG" id="spo:2543399"/>
<dbReference type="PomBase" id="SPAC3G9.12">
    <property type="gene designation" value="peg1"/>
</dbReference>
<dbReference type="VEuPathDB" id="FungiDB:SPAC3G9.12"/>
<dbReference type="eggNOG" id="ENOG502QT5T">
    <property type="taxonomic scope" value="Eukaryota"/>
</dbReference>
<dbReference type="HOGENOM" id="CLU_259521_0_0_1"/>
<dbReference type="InParanoid" id="O42874"/>
<dbReference type="OMA" id="IHGCLLW"/>
<dbReference type="PRO" id="PR:O42874"/>
<dbReference type="Proteomes" id="UP000002485">
    <property type="component" value="Chromosome I"/>
</dbReference>
<dbReference type="GO" id="GO:0005881">
    <property type="term" value="C:cytoplasmic microtubule"/>
    <property type="evidence" value="ECO:0000318"/>
    <property type="project" value="GO_Central"/>
</dbReference>
<dbReference type="GO" id="GO:0062194">
    <property type="term" value="C:cytoplasmic microtubule minus-end"/>
    <property type="evidence" value="ECO:0000314"/>
    <property type="project" value="PomBase"/>
</dbReference>
<dbReference type="GO" id="GO:0005829">
    <property type="term" value="C:cytosol"/>
    <property type="evidence" value="ECO:0007005"/>
    <property type="project" value="PomBase"/>
</dbReference>
<dbReference type="GO" id="GO:0000776">
    <property type="term" value="C:kinetochore"/>
    <property type="evidence" value="ECO:0000314"/>
    <property type="project" value="PomBase"/>
</dbReference>
<dbReference type="GO" id="GO:0005875">
    <property type="term" value="C:microtubule associated complex"/>
    <property type="evidence" value="ECO:0000314"/>
    <property type="project" value="PomBase"/>
</dbReference>
<dbReference type="GO" id="GO:0015630">
    <property type="term" value="C:microtubule cytoskeleton"/>
    <property type="evidence" value="ECO:0007005"/>
    <property type="project" value="PomBase"/>
</dbReference>
<dbReference type="GO" id="GO:0005815">
    <property type="term" value="C:microtubule organizing center"/>
    <property type="evidence" value="ECO:0000318"/>
    <property type="project" value="GO_Central"/>
</dbReference>
<dbReference type="GO" id="GO:0072686">
    <property type="term" value="C:mitotic spindle"/>
    <property type="evidence" value="ECO:0000314"/>
    <property type="project" value="PomBase"/>
</dbReference>
<dbReference type="GO" id="GO:1990023">
    <property type="term" value="C:mitotic spindle midzone"/>
    <property type="evidence" value="ECO:0000314"/>
    <property type="project" value="PomBase"/>
</dbReference>
<dbReference type="GO" id="GO:0044732">
    <property type="term" value="C:mitotic spindle pole body"/>
    <property type="evidence" value="ECO:0007005"/>
    <property type="project" value="PomBase"/>
</dbReference>
<dbReference type="GO" id="GO:0005635">
    <property type="term" value="C:nuclear envelope"/>
    <property type="evidence" value="ECO:0007005"/>
    <property type="project" value="PomBase"/>
</dbReference>
<dbReference type="GO" id="GO:0005634">
    <property type="term" value="C:nucleus"/>
    <property type="evidence" value="ECO:0007005"/>
    <property type="project" value="PomBase"/>
</dbReference>
<dbReference type="GO" id="GO:0005876">
    <property type="term" value="C:spindle microtubule"/>
    <property type="evidence" value="ECO:0000314"/>
    <property type="project" value="PomBase"/>
</dbReference>
<dbReference type="GO" id="GO:0099070">
    <property type="term" value="C:static microtubule bundle"/>
    <property type="evidence" value="ECO:0000314"/>
    <property type="project" value="PomBase"/>
</dbReference>
<dbReference type="GO" id="GO:0008017">
    <property type="term" value="F:microtubule binding"/>
    <property type="evidence" value="ECO:0000318"/>
    <property type="project" value="GO_Central"/>
</dbReference>
<dbReference type="GO" id="GO:0060172">
    <property type="term" value="P:astral microtubule depolymerization"/>
    <property type="evidence" value="ECO:0000315"/>
    <property type="project" value="PomBase"/>
</dbReference>
<dbReference type="GO" id="GO:0051301">
    <property type="term" value="P:cell division"/>
    <property type="evidence" value="ECO:0007669"/>
    <property type="project" value="UniProtKB-KW"/>
</dbReference>
<dbReference type="GO" id="GO:0001578">
    <property type="term" value="P:microtubule bundle formation"/>
    <property type="evidence" value="ECO:0000315"/>
    <property type="project" value="PomBase"/>
</dbReference>
<dbReference type="GO" id="GO:0062195">
    <property type="term" value="P:microtubule bundle maintenance"/>
    <property type="evidence" value="ECO:0000315"/>
    <property type="project" value="PomBase"/>
</dbReference>
<dbReference type="GO" id="GO:0090307">
    <property type="term" value="P:mitotic spindle assembly"/>
    <property type="evidence" value="ECO:0000315"/>
    <property type="project" value="PomBase"/>
</dbReference>
<dbReference type="GO" id="GO:0061804">
    <property type="term" value="P:mitotic spindle formation (spindle phase one)"/>
    <property type="evidence" value="ECO:0000315"/>
    <property type="project" value="PomBase"/>
</dbReference>
<dbReference type="GO" id="GO:0051256">
    <property type="term" value="P:mitotic spindle midzone assembly"/>
    <property type="evidence" value="ECO:0000315"/>
    <property type="project" value="PomBase"/>
</dbReference>
<dbReference type="Gene3D" id="1.25.10.10">
    <property type="entry name" value="Leucine-rich Repeat Variant"/>
    <property type="match status" value="3"/>
</dbReference>
<dbReference type="InterPro" id="IPR011989">
    <property type="entry name" value="ARM-like"/>
</dbReference>
<dbReference type="InterPro" id="IPR016024">
    <property type="entry name" value="ARM-type_fold"/>
</dbReference>
<dbReference type="InterPro" id="IPR024395">
    <property type="entry name" value="CLASP_N_dom"/>
</dbReference>
<dbReference type="InterPro" id="IPR034085">
    <property type="entry name" value="TOG"/>
</dbReference>
<dbReference type="PANTHER" id="PTHR21567">
    <property type="entry name" value="CLASP"/>
    <property type="match status" value="1"/>
</dbReference>
<dbReference type="PANTHER" id="PTHR21567:SF9">
    <property type="entry name" value="CLIP-ASSOCIATING PROTEIN"/>
    <property type="match status" value="1"/>
</dbReference>
<dbReference type="Pfam" id="PF12348">
    <property type="entry name" value="CLASP_N"/>
    <property type="match status" value="1"/>
</dbReference>
<dbReference type="SMART" id="SM01349">
    <property type="entry name" value="TOG"/>
    <property type="match status" value="2"/>
</dbReference>
<dbReference type="SUPFAM" id="SSF48371">
    <property type="entry name" value="ARM repeat"/>
    <property type="match status" value="1"/>
</dbReference>
<feature type="chain" id="PRO_0000272294" description="Protein peg1">
    <location>
        <begin position="1"/>
        <end position="1462"/>
    </location>
</feature>
<feature type="region of interest" description="Disordered" evidence="3">
    <location>
        <begin position="528"/>
        <end position="563"/>
    </location>
</feature>
<feature type="region of interest" description="Disordered" evidence="3">
    <location>
        <begin position="573"/>
        <end position="592"/>
    </location>
</feature>
<feature type="region of interest" description="Disordered" evidence="3">
    <location>
        <begin position="838"/>
        <end position="928"/>
    </location>
</feature>
<feature type="coiled-coil region" evidence="2">
    <location>
        <begin position="1342"/>
        <end position="1367"/>
    </location>
</feature>
<feature type="compositionally biased region" description="Low complexity" evidence="3">
    <location>
        <begin position="538"/>
        <end position="552"/>
    </location>
</feature>
<feature type="compositionally biased region" description="Low complexity" evidence="3">
    <location>
        <begin position="574"/>
        <end position="589"/>
    </location>
</feature>
<feature type="compositionally biased region" description="Low complexity" evidence="3">
    <location>
        <begin position="847"/>
        <end position="866"/>
    </location>
</feature>
<feature type="compositionally biased region" description="Basic and acidic residues" evidence="3">
    <location>
        <begin position="870"/>
        <end position="896"/>
    </location>
</feature>
<feature type="modified residue" description="Phosphoserine" evidence="5">
    <location>
        <position position="599"/>
    </location>
</feature>
<feature type="modified residue" description="Phosphoserine" evidence="5">
    <location>
        <position position="1221"/>
    </location>
</feature>
<feature type="mutagenesis site" description="In allele peg1.1; abrogates bipolar spindle formation at 36 degrees Celsius." evidence="4">
    <original>L</original>
    <variation>F</variation>
    <location>
        <position position="747"/>
    </location>
</feature>
<reference key="1">
    <citation type="journal article" date="2002" name="Nature">
        <title>The genome sequence of Schizosaccharomyces pombe.</title>
        <authorList>
            <person name="Wood V."/>
            <person name="Gwilliam R."/>
            <person name="Rajandream M.A."/>
            <person name="Lyne M.H."/>
            <person name="Lyne R."/>
            <person name="Stewart A."/>
            <person name="Sgouros J.G."/>
            <person name="Peat N."/>
            <person name="Hayles J."/>
            <person name="Baker S.G."/>
            <person name="Basham D."/>
            <person name="Bowman S."/>
            <person name="Brooks K."/>
            <person name="Brown D."/>
            <person name="Brown S."/>
            <person name="Chillingworth T."/>
            <person name="Churcher C.M."/>
            <person name="Collins M."/>
            <person name="Connor R."/>
            <person name="Cronin A."/>
            <person name="Davis P."/>
            <person name="Feltwell T."/>
            <person name="Fraser A."/>
            <person name="Gentles S."/>
            <person name="Goble A."/>
            <person name="Hamlin N."/>
            <person name="Harris D.E."/>
            <person name="Hidalgo J."/>
            <person name="Hodgson G."/>
            <person name="Holroyd S."/>
            <person name="Hornsby T."/>
            <person name="Howarth S."/>
            <person name="Huckle E.J."/>
            <person name="Hunt S."/>
            <person name="Jagels K."/>
            <person name="James K.D."/>
            <person name="Jones L."/>
            <person name="Jones M."/>
            <person name="Leather S."/>
            <person name="McDonald S."/>
            <person name="McLean J."/>
            <person name="Mooney P."/>
            <person name="Moule S."/>
            <person name="Mungall K.L."/>
            <person name="Murphy L.D."/>
            <person name="Niblett D."/>
            <person name="Odell C."/>
            <person name="Oliver K."/>
            <person name="O'Neil S."/>
            <person name="Pearson D."/>
            <person name="Quail M.A."/>
            <person name="Rabbinowitsch E."/>
            <person name="Rutherford K.M."/>
            <person name="Rutter S."/>
            <person name="Saunders D."/>
            <person name="Seeger K."/>
            <person name="Sharp S."/>
            <person name="Skelton J."/>
            <person name="Simmonds M.N."/>
            <person name="Squares R."/>
            <person name="Squares S."/>
            <person name="Stevens K."/>
            <person name="Taylor K."/>
            <person name="Taylor R.G."/>
            <person name="Tivey A."/>
            <person name="Walsh S.V."/>
            <person name="Warren T."/>
            <person name="Whitehead S."/>
            <person name="Woodward J.R."/>
            <person name="Volckaert G."/>
            <person name="Aert R."/>
            <person name="Robben J."/>
            <person name="Grymonprez B."/>
            <person name="Weltjens I."/>
            <person name="Vanstreels E."/>
            <person name="Rieger M."/>
            <person name="Schaefer M."/>
            <person name="Mueller-Auer S."/>
            <person name="Gabel C."/>
            <person name="Fuchs M."/>
            <person name="Duesterhoeft A."/>
            <person name="Fritzc C."/>
            <person name="Holzer E."/>
            <person name="Moestl D."/>
            <person name="Hilbert H."/>
            <person name="Borzym K."/>
            <person name="Langer I."/>
            <person name="Beck A."/>
            <person name="Lehrach H."/>
            <person name="Reinhardt R."/>
            <person name="Pohl T.M."/>
            <person name="Eger P."/>
            <person name="Zimmermann W."/>
            <person name="Wedler H."/>
            <person name="Wambutt R."/>
            <person name="Purnelle B."/>
            <person name="Goffeau A."/>
            <person name="Cadieu E."/>
            <person name="Dreano S."/>
            <person name="Gloux S."/>
            <person name="Lelaure V."/>
            <person name="Mottier S."/>
            <person name="Galibert F."/>
            <person name="Aves S.J."/>
            <person name="Xiang Z."/>
            <person name="Hunt C."/>
            <person name="Moore K."/>
            <person name="Hurst S.M."/>
            <person name="Lucas M."/>
            <person name="Rochet M."/>
            <person name="Gaillardin C."/>
            <person name="Tallada V.A."/>
            <person name="Garzon A."/>
            <person name="Thode G."/>
            <person name="Daga R.R."/>
            <person name="Cruzado L."/>
            <person name="Jimenez J."/>
            <person name="Sanchez M."/>
            <person name="del Rey F."/>
            <person name="Benito J."/>
            <person name="Dominguez A."/>
            <person name="Revuelta J.L."/>
            <person name="Moreno S."/>
            <person name="Armstrong J."/>
            <person name="Forsburg S.L."/>
            <person name="Cerutti L."/>
            <person name="Lowe T."/>
            <person name="McCombie W.R."/>
            <person name="Paulsen I."/>
            <person name="Potashkin J."/>
            <person name="Shpakovski G.V."/>
            <person name="Ussery D."/>
            <person name="Barrell B.G."/>
            <person name="Nurse P."/>
        </authorList>
    </citation>
    <scope>NUCLEOTIDE SEQUENCE [LARGE SCALE GENOMIC DNA]</scope>
    <source>
        <strain>972 / ATCC 24843</strain>
    </source>
</reference>
<reference key="2">
    <citation type="journal article" date="2006" name="Genes Dev.">
        <title>S. pombe CLASP needs dynein, not EB1 or CLIP170, to induce microtubule instability and slows polymerization rates at cell tips in a dynein-dependent manner.</title>
        <authorList>
            <person name="Grallert A."/>
            <person name="Beuter C."/>
            <person name="Craven R.A."/>
            <person name="Bagley S."/>
            <person name="Wilks D."/>
            <person name="Fleig U."/>
            <person name="Hagan I.M."/>
        </authorList>
    </citation>
    <scope>FUNCTION</scope>
    <scope>INTERACTION WITH DHC1; MAL3 AND TEA1</scope>
    <scope>SUBCELLULAR LOCATION</scope>
    <scope>MUTAGENESIS OF LEU-747</scope>
</reference>
<reference key="3">
    <citation type="journal article" date="2008" name="J. Proteome Res.">
        <title>Phosphoproteome analysis of fission yeast.</title>
        <authorList>
            <person name="Wilson-Grady J.T."/>
            <person name="Villen J."/>
            <person name="Gygi S.P."/>
        </authorList>
    </citation>
    <scope>PHOSPHORYLATION [LARGE SCALE ANALYSIS] AT SER-599 AND SER-1221</scope>
    <scope>IDENTIFICATION BY MASS SPECTROMETRY</scope>
</reference>
<comment type="function">
    <text evidence="4">Microtubule binding protein that regulates the stability of dynamic microtubules. Required for mitotic spindle formation.</text>
</comment>
<comment type="subunit">
    <text evidence="1 4">Interacts with microtubules (By similarity). Interacts with dhc1, mal3 and tea1.</text>
</comment>
<comment type="interaction">
    <interactant intactId="EBI-1112382">
        <id>O42874</id>
    </interactant>
    <interactant intactId="EBI-1002268">
        <id>Q10113</id>
        <label>mal3</label>
    </interactant>
    <organismsDiffer>false</organismsDiffer>
    <experiments>4</experiments>
</comment>
<comment type="interaction">
    <interactant intactId="EBI-1112382">
        <id>O42874</id>
    </interactant>
    <interactant intactId="EBI-1102463">
        <id>P79065</id>
        <label>tip1</label>
    </interactant>
    <organismsDiffer>false</organismsDiffer>
    <experiments>4</experiments>
</comment>
<comment type="subcellular location">
    <subcellularLocation>
        <location evidence="4">Cytoplasm</location>
        <location evidence="4">Cytoskeleton</location>
    </subcellularLocation>
    <subcellularLocation>
        <location evidence="4">Cytoplasm</location>
        <location evidence="4">Cytoskeleton</location>
        <location evidence="4">Spindle</location>
    </subcellularLocation>
    <subcellularLocation>
        <location evidence="4">Cytoplasm</location>
        <location evidence="4">Cytoskeleton</location>
        <location evidence="4">Microtubule organizing center</location>
        <location evidence="4">Spindle pole body</location>
    </subcellularLocation>
    <text>Colocalizes with cytoplasmic microtubules and associates with the mitotic spindle throughout mitosis.</text>
</comment>
<comment type="similarity">
    <text evidence="6">Belongs to the CLASP family.</text>
</comment>
<evidence type="ECO:0000250" key="1"/>
<evidence type="ECO:0000255" key="2"/>
<evidence type="ECO:0000256" key="3">
    <source>
        <dbReference type="SAM" id="MobiDB-lite"/>
    </source>
</evidence>
<evidence type="ECO:0000269" key="4">
    <source>
    </source>
</evidence>
<evidence type="ECO:0000269" key="5">
    <source>
    </source>
</evidence>
<evidence type="ECO:0000305" key="6"/>